<evidence type="ECO:0000255" key="1"/>
<evidence type="ECO:0000305" key="2"/>
<proteinExistence type="predicted"/>
<comment type="subcellular location">
    <subcellularLocation>
        <location evidence="2">Cell membrane</location>
        <topology evidence="2">Multi-pass membrane protein</topology>
    </subcellularLocation>
</comment>
<accession>P47483</accession>
<protein>
    <recommendedName>
        <fullName>Uncharacterized protein MG241</fullName>
    </recommendedName>
</protein>
<dbReference type="EMBL" id="L43967">
    <property type="protein sequence ID" value="AAC71462.1"/>
    <property type="molecule type" value="Genomic_DNA"/>
</dbReference>
<dbReference type="PIR" id="F64226">
    <property type="entry name" value="F64226"/>
</dbReference>
<dbReference type="RefSeq" id="WP_010869388.1">
    <property type="nucleotide sequence ID" value="NC_000908.2"/>
</dbReference>
<dbReference type="SMR" id="P47483"/>
<dbReference type="STRING" id="243273.MG_241"/>
<dbReference type="GeneID" id="88282387"/>
<dbReference type="KEGG" id="mge:MG_241"/>
<dbReference type="eggNOG" id="ENOG5030NBX">
    <property type="taxonomic scope" value="Bacteria"/>
</dbReference>
<dbReference type="HOGENOM" id="CLU_440630_0_0_14"/>
<dbReference type="InParanoid" id="P47483"/>
<dbReference type="OrthoDB" id="396107at2"/>
<dbReference type="BioCyc" id="MGEN243273:G1GJ2-288-MONOMER"/>
<dbReference type="Proteomes" id="UP000000807">
    <property type="component" value="Chromosome"/>
</dbReference>
<dbReference type="GO" id="GO:0005886">
    <property type="term" value="C:plasma membrane"/>
    <property type="evidence" value="ECO:0007669"/>
    <property type="project" value="UniProtKB-SubCell"/>
</dbReference>
<dbReference type="InterPro" id="IPR054979">
    <property type="entry name" value="MPN337"/>
</dbReference>
<dbReference type="NCBIfam" id="NF045749">
    <property type="entry name" value="MPN337"/>
    <property type="match status" value="1"/>
</dbReference>
<dbReference type="NCBIfam" id="NF045750">
    <property type="entry name" value="MPN338"/>
    <property type="match status" value="1"/>
</dbReference>
<gene>
    <name type="ordered locus">MG241</name>
</gene>
<organism>
    <name type="scientific">Mycoplasma genitalium (strain ATCC 33530 / DSM 19775 / NCTC 10195 / G37)</name>
    <name type="common">Mycoplasmoides genitalium</name>
    <dbReference type="NCBI Taxonomy" id="243273"/>
    <lineage>
        <taxon>Bacteria</taxon>
        <taxon>Bacillati</taxon>
        <taxon>Mycoplasmatota</taxon>
        <taxon>Mycoplasmoidales</taxon>
        <taxon>Mycoplasmoidaceae</taxon>
        <taxon>Mycoplasmoides</taxon>
    </lineage>
</organism>
<sequence length="620" mass="72875">MIQKEMEIYNLFTFQIDLDKKLLFEKSNDQKNYSKIRTHYFKHKFKNKSAVFLNKNLIKNSLNKVLLNFSDFVSGAGIDTVFNQIIDEDPEVLNYLKQVKKDLSKENNATSQLTFNVTINPKNTLANFFEGFNIYLHFNEENNTVIGSFSLQWHIKKTDLFSETKNIAINNLIHTFCKNNMHEISFMQIINCFSKTKINKHGEIVLKSCAFKQKWQNVVAEKYPFSTASKDLEKINDFFDALFVMLLLVCHLNKNLLWLCEKTDFFEWKPSQKTALFKANDSGAYLARMLLFLNDWYNENQAITTADIENVNEVEDIGKLVEKYSTNQPQKLSLNSTVYVLQTKQKQFFLKNDFFFNNNEAKLFFLITMKPNVFGLDDTAIANNLNLKKISDFFKEIDFNDEDILNDFKQEQEKLLVRRTFNQLLFMNKNTEILSVVNDKQKSVIHNIVWTITYSKAIMLKAFDYSKAFEKNRTSDPSLLRSNLTVINRLRYLSEYFQNASLKYDLLYTKAKQYMQIDKFINDMIRKVNHEDEIFGKFKERIYLSLGIISAVVFGIVEFFNCVWTILTVSQEVVDKSVLDPRNIIFISIGTILVLFLLVTILVFMTRRLYLFEINKKHKN</sequence>
<keyword id="KW-1003">Cell membrane</keyword>
<keyword id="KW-0472">Membrane</keyword>
<keyword id="KW-1185">Reference proteome</keyword>
<keyword id="KW-0812">Transmembrane</keyword>
<keyword id="KW-1133">Transmembrane helix</keyword>
<reference key="1">
    <citation type="journal article" date="1995" name="Science">
        <title>The minimal gene complement of Mycoplasma genitalium.</title>
        <authorList>
            <person name="Fraser C.M."/>
            <person name="Gocayne J.D."/>
            <person name="White O."/>
            <person name="Adams M.D."/>
            <person name="Clayton R.A."/>
            <person name="Fleischmann R.D."/>
            <person name="Bult C.J."/>
            <person name="Kerlavage A.R."/>
            <person name="Sutton G.G."/>
            <person name="Kelley J.M."/>
            <person name="Fritchman J.L."/>
            <person name="Weidman J.F."/>
            <person name="Small K.V."/>
            <person name="Sandusky M."/>
            <person name="Fuhrmann J.L."/>
            <person name="Nguyen D.T."/>
            <person name="Utterback T.R."/>
            <person name="Saudek D.M."/>
            <person name="Phillips C.A."/>
            <person name="Merrick J.M."/>
            <person name="Tomb J.-F."/>
            <person name="Dougherty B.A."/>
            <person name="Bott K.F."/>
            <person name="Hu P.-C."/>
            <person name="Lucier T.S."/>
            <person name="Peterson S.N."/>
            <person name="Smith H.O."/>
            <person name="Hutchison C.A. III"/>
            <person name="Venter J.C."/>
        </authorList>
    </citation>
    <scope>NUCLEOTIDE SEQUENCE [LARGE SCALE GENOMIC DNA]</scope>
    <source>
        <strain>ATCC 33530 / DSM 19775 / NCTC 10195 / G37</strain>
    </source>
</reference>
<feature type="chain" id="PRO_0000210479" description="Uncharacterized protein MG241">
    <location>
        <begin position="1"/>
        <end position="620"/>
    </location>
</feature>
<feature type="transmembrane region" description="Helical" evidence="1">
    <location>
        <begin position="66"/>
        <end position="86"/>
    </location>
</feature>
<feature type="transmembrane region" description="Helical" evidence="1">
    <location>
        <begin position="238"/>
        <end position="258"/>
    </location>
</feature>
<feature type="transmembrane region" description="Helical" evidence="1">
    <location>
        <begin position="546"/>
        <end position="566"/>
    </location>
</feature>
<feature type="transmembrane region" description="Helical" evidence="1">
    <location>
        <begin position="584"/>
        <end position="604"/>
    </location>
</feature>
<name>Y241_MYCGE</name>